<reference key="1">
    <citation type="journal article" date="2001" name="Nature">
        <title>Genome sequence of enterohaemorrhagic Escherichia coli O157:H7.</title>
        <authorList>
            <person name="Perna N.T."/>
            <person name="Plunkett G. III"/>
            <person name="Burland V."/>
            <person name="Mau B."/>
            <person name="Glasner J.D."/>
            <person name="Rose D.J."/>
            <person name="Mayhew G.F."/>
            <person name="Evans P.S."/>
            <person name="Gregor J."/>
            <person name="Kirkpatrick H.A."/>
            <person name="Posfai G."/>
            <person name="Hackett J."/>
            <person name="Klink S."/>
            <person name="Boutin A."/>
            <person name="Shao Y."/>
            <person name="Miller L."/>
            <person name="Grotbeck E.J."/>
            <person name="Davis N.W."/>
            <person name="Lim A."/>
            <person name="Dimalanta E.T."/>
            <person name="Potamousis K."/>
            <person name="Apodaca J."/>
            <person name="Anantharaman T.S."/>
            <person name="Lin J."/>
            <person name="Yen G."/>
            <person name="Schwartz D.C."/>
            <person name="Welch R.A."/>
            <person name="Blattner F.R."/>
        </authorList>
    </citation>
    <scope>NUCLEOTIDE SEQUENCE [LARGE SCALE GENOMIC DNA]</scope>
    <source>
        <strain>O157:H7 / EDL933 / ATCC 700927 / EHEC</strain>
    </source>
</reference>
<reference key="2">
    <citation type="journal article" date="2001" name="DNA Res.">
        <title>Complete genome sequence of enterohemorrhagic Escherichia coli O157:H7 and genomic comparison with a laboratory strain K-12.</title>
        <authorList>
            <person name="Hayashi T."/>
            <person name="Makino K."/>
            <person name="Ohnishi M."/>
            <person name="Kurokawa K."/>
            <person name="Ishii K."/>
            <person name="Yokoyama K."/>
            <person name="Han C.-G."/>
            <person name="Ohtsubo E."/>
            <person name="Nakayama K."/>
            <person name="Murata T."/>
            <person name="Tanaka M."/>
            <person name="Tobe T."/>
            <person name="Iida T."/>
            <person name="Takami H."/>
            <person name="Honda T."/>
            <person name="Sasakawa C."/>
            <person name="Ogasawara N."/>
            <person name="Yasunaga T."/>
            <person name="Kuhara S."/>
            <person name="Shiba T."/>
            <person name="Hattori M."/>
            <person name="Shinagawa H."/>
        </authorList>
    </citation>
    <scope>NUCLEOTIDE SEQUENCE [LARGE SCALE GENOMIC DNA]</scope>
    <source>
        <strain>O157:H7 / Sakai / RIMD 0509952 / EHEC</strain>
    </source>
</reference>
<evidence type="ECO:0000255" key="1">
    <source>
        <dbReference type="HAMAP-Rule" id="MF_00150"/>
    </source>
</evidence>
<gene>
    <name evidence="1" type="primary">argC</name>
    <name type="ordered locus">Z5516</name>
    <name type="ordered locus">ECs4887</name>
</gene>
<feature type="chain" id="PRO_0000112403" description="N-acetyl-gamma-glutamyl-phosphate reductase">
    <location>
        <begin position="1"/>
        <end position="334"/>
    </location>
</feature>
<feature type="active site" evidence="1">
    <location>
        <position position="154"/>
    </location>
</feature>
<accession>Q8X732</accession>
<organism>
    <name type="scientific">Escherichia coli O157:H7</name>
    <dbReference type="NCBI Taxonomy" id="83334"/>
    <lineage>
        <taxon>Bacteria</taxon>
        <taxon>Pseudomonadati</taxon>
        <taxon>Pseudomonadota</taxon>
        <taxon>Gammaproteobacteria</taxon>
        <taxon>Enterobacterales</taxon>
        <taxon>Enterobacteriaceae</taxon>
        <taxon>Escherichia</taxon>
    </lineage>
</organism>
<sequence length="334" mass="35860">MLNTLIVGASGYAGAELVTCVNRHPHMNITALTVSAQSNDAGKLISDLHPQLKGIVDLPLQPMSDISEFSPGVDVVFLATAHEVSHDLAPQFLDAGCVVFDLSGAFRVNDATFYEKYYGFTHQYPELLEQAAYGLAEWCGNKLKEANLIAVPGCYPTAAQLALKPLIDADLLDLNQWPVINATSGVSGAGRKAAISNSFCEVSLQPYGVFTHRHQPEIATHLGADVIFTPHLGNFPRGILETITCRLKPGVTQAQVAQALQQAYAHKPLVRLYDKGVPALKNVVGLPFCDIGFAVQGEHLIIVATEDNLLKGAAAQAVQCANIRFGYAETQSLI</sequence>
<comment type="function">
    <text evidence="1">Catalyzes the NADPH-dependent reduction of N-acetyl-5-glutamyl phosphate to yield N-acetyl-L-glutamate 5-semialdehyde.</text>
</comment>
<comment type="catalytic activity">
    <reaction evidence="1">
        <text>N-acetyl-L-glutamate 5-semialdehyde + phosphate + NADP(+) = N-acetyl-L-glutamyl 5-phosphate + NADPH + H(+)</text>
        <dbReference type="Rhea" id="RHEA:21588"/>
        <dbReference type="ChEBI" id="CHEBI:15378"/>
        <dbReference type="ChEBI" id="CHEBI:29123"/>
        <dbReference type="ChEBI" id="CHEBI:43474"/>
        <dbReference type="ChEBI" id="CHEBI:57783"/>
        <dbReference type="ChEBI" id="CHEBI:57936"/>
        <dbReference type="ChEBI" id="CHEBI:58349"/>
        <dbReference type="EC" id="1.2.1.38"/>
    </reaction>
</comment>
<comment type="pathway">
    <text evidence="1">Amino-acid biosynthesis; L-arginine biosynthesis; N(2)-acetyl-L-ornithine from L-glutamate: step 3/4.</text>
</comment>
<comment type="subcellular location">
    <subcellularLocation>
        <location evidence="1">Cytoplasm</location>
    </subcellularLocation>
</comment>
<comment type="similarity">
    <text evidence="1">Belongs to the NAGSA dehydrogenase family. Type 1 subfamily.</text>
</comment>
<name>ARGC_ECO57</name>
<dbReference type="EC" id="1.2.1.38" evidence="1"/>
<dbReference type="EMBL" id="AE005174">
    <property type="protein sequence ID" value="AAG59160.1"/>
    <property type="molecule type" value="Genomic_DNA"/>
</dbReference>
<dbReference type="EMBL" id="BA000007">
    <property type="protein sequence ID" value="BAB38310.1"/>
    <property type="molecule type" value="Genomic_DNA"/>
</dbReference>
<dbReference type="PIR" id="D86087">
    <property type="entry name" value="D86087"/>
</dbReference>
<dbReference type="PIR" id="G91239">
    <property type="entry name" value="G91239"/>
</dbReference>
<dbReference type="RefSeq" id="NP_312914.1">
    <property type="nucleotide sequence ID" value="NC_002695.1"/>
</dbReference>
<dbReference type="RefSeq" id="WP_000935347.1">
    <property type="nucleotide sequence ID" value="NZ_VOAI01000032.1"/>
</dbReference>
<dbReference type="SMR" id="Q8X732"/>
<dbReference type="STRING" id="155864.Z5516"/>
<dbReference type="GeneID" id="914990"/>
<dbReference type="KEGG" id="ece:Z5516"/>
<dbReference type="KEGG" id="ecs:ECs_4887"/>
<dbReference type="PATRIC" id="fig|386585.9.peg.5111"/>
<dbReference type="eggNOG" id="COG0002">
    <property type="taxonomic scope" value="Bacteria"/>
</dbReference>
<dbReference type="HOGENOM" id="CLU_006384_0_1_6"/>
<dbReference type="OMA" id="PHLTPMI"/>
<dbReference type="UniPathway" id="UPA00068">
    <property type="reaction ID" value="UER00108"/>
</dbReference>
<dbReference type="Proteomes" id="UP000000558">
    <property type="component" value="Chromosome"/>
</dbReference>
<dbReference type="Proteomes" id="UP000002519">
    <property type="component" value="Chromosome"/>
</dbReference>
<dbReference type="GO" id="GO:0005737">
    <property type="term" value="C:cytoplasm"/>
    <property type="evidence" value="ECO:0007669"/>
    <property type="project" value="UniProtKB-SubCell"/>
</dbReference>
<dbReference type="GO" id="GO:0003942">
    <property type="term" value="F:N-acetyl-gamma-glutamyl-phosphate reductase activity"/>
    <property type="evidence" value="ECO:0007669"/>
    <property type="project" value="UniProtKB-UniRule"/>
</dbReference>
<dbReference type="GO" id="GO:0051287">
    <property type="term" value="F:NAD binding"/>
    <property type="evidence" value="ECO:0007669"/>
    <property type="project" value="InterPro"/>
</dbReference>
<dbReference type="GO" id="GO:0070401">
    <property type="term" value="F:NADP+ binding"/>
    <property type="evidence" value="ECO:0007669"/>
    <property type="project" value="InterPro"/>
</dbReference>
<dbReference type="GO" id="GO:0006526">
    <property type="term" value="P:L-arginine biosynthetic process"/>
    <property type="evidence" value="ECO:0007669"/>
    <property type="project" value="UniProtKB-UniRule"/>
</dbReference>
<dbReference type="CDD" id="cd23934">
    <property type="entry name" value="AGPR_1_C"/>
    <property type="match status" value="1"/>
</dbReference>
<dbReference type="CDD" id="cd17895">
    <property type="entry name" value="AGPR_1_N"/>
    <property type="match status" value="1"/>
</dbReference>
<dbReference type="FunFam" id="3.30.360.10:FF:000014">
    <property type="entry name" value="N-acetyl-gamma-glutamyl-phosphate reductase"/>
    <property type="match status" value="1"/>
</dbReference>
<dbReference type="FunFam" id="3.40.50.720:FF:000117">
    <property type="entry name" value="N-acetyl-gamma-glutamyl-phosphate reductase"/>
    <property type="match status" value="1"/>
</dbReference>
<dbReference type="Gene3D" id="3.30.360.10">
    <property type="entry name" value="Dihydrodipicolinate Reductase, domain 2"/>
    <property type="match status" value="1"/>
</dbReference>
<dbReference type="Gene3D" id="3.40.50.720">
    <property type="entry name" value="NAD(P)-binding Rossmann-like Domain"/>
    <property type="match status" value="1"/>
</dbReference>
<dbReference type="HAMAP" id="MF_00150">
    <property type="entry name" value="ArgC_type1"/>
    <property type="match status" value="1"/>
</dbReference>
<dbReference type="InterPro" id="IPR023013">
    <property type="entry name" value="AGPR_AS"/>
</dbReference>
<dbReference type="InterPro" id="IPR000706">
    <property type="entry name" value="AGPR_type-1"/>
</dbReference>
<dbReference type="InterPro" id="IPR036291">
    <property type="entry name" value="NAD(P)-bd_dom_sf"/>
</dbReference>
<dbReference type="InterPro" id="IPR050085">
    <property type="entry name" value="NAGSA_dehydrogenase"/>
</dbReference>
<dbReference type="InterPro" id="IPR000534">
    <property type="entry name" value="Semialdehyde_DH_NAD-bd"/>
</dbReference>
<dbReference type="NCBIfam" id="TIGR01850">
    <property type="entry name" value="argC"/>
    <property type="match status" value="1"/>
</dbReference>
<dbReference type="PANTHER" id="PTHR32338:SF10">
    <property type="entry name" value="N-ACETYL-GAMMA-GLUTAMYL-PHOSPHATE REDUCTASE, CHLOROPLASTIC-RELATED"/>
    <property type="match status" value="1"/>
</dbReference>
<dbReference type="PANTHER" id="PTHR32338">
    <property type="entry name" value="N-ACETYL-GAMMA-GLUTAMYL-PHOSPHATE REDUCTASE, CHLOROPLASTIC-RELATED-RELATED"/>
    <property type="match status" value="1"/>
</dbReference>
<dbReference type="Pfam" id="PF01118">
    <property type="entry name" value="Semialdhyde_dh"/>
    <property type="match status" value="1"/>
</dbReference>
<dbReference type="Pfam" id="PF22698">
    <property type="entry name" value="Semialdhyde_dhC_1"/>
    <property type="match status" value="1"/>
</dbReference>
<dbReference type="SMART" id="SM00859">
    <property type="entry name" value="Semialdhyde_dh"/>
    <property type="match status" value="1"/>
</dbReference>
<dbReference type="SUPFAM" id="SSF55347">
    <property type="entry name" value="Glyceraldehyde-3-phosphate dehydrogenase-like, C-terminal domain"/>
    <property type="match status" value="1"/>
</dbReference>
<dbReference type="SUPFAM" id="SSF51735">
    <property type="entry name" value="NAD(P)-binding Rossmann-fold domains"/>
    <property type="match status" value="1"/>
</dbReference>
<dbReference type="PROSITE" id="PS01224">
    <property type="entry name" value="ARGC"/>
    <property type="match status" value="1"/>
</dbReference>
<proteinExistence type="inferred from homology"/>
<protein>
    <recommendedName>
        <fullName evidence="1">N-acetyl-gamma-glutamyl-phosphate reductase</fullName>
        <shortName evidence="1">AGPR</shortName>
        <ecNumber evidence="1">1.2.1.38</ecNumber>
    </recommendedName>
    <alternativeName>
        <fullName evidence="1">N-acetyl-glutamate semialdehyde dehydrogenase</fullName>
        <shortName evidence="1">NAGSA dehydrogenase</shortName>
    </alternativeName>
</protein>
<keyword id="KW-0028">Amino-acid biosynthesis</keyword>
<keyword id="KW-0055">Arginine biosynthesis</keyword>
<keyword id="KW-0963">Cytoplasm</keyword>
<keyword id="KW-0521">NADP</keyword>
<keyword id="KW-0560">Oxidoreductase</keyword>
<keyword id="KW-1185">Reference proteome</keyword>